<protein>
    <recommendedName>
        <fullName evidence="6">Large ribosomal subunit protein eL42</fullName>
    </recommendedName>
    <alternativeName>
        <fullName>60S ribosomal protein L44</fullName>
    </alternativeName>
</protein>
<accession>O97231</accession>
<name>RL44_PLAF7</name>
<evidence type="ECO:0000250" key="1"/>
<evidence type="ECO:0000269" key="2">
    <source>
    </source>
</evidence>
<evidence type="ECO:0000269" key="3">
    <source>
    </source>
</evidence>
<evidence type="ECO:0000269" key="4">
    <source>
    </source>
</evidence>
<evidence type="ECO:0000303" key="5">
    <source>
    </source>
</evidence>
<evidence type="ECO:0000305" key="6"/>
<evidence type="ECO:0000305" key="7">
    <source>
    </source>
</evidence>
<evidence type="ECO:0000305" key="8">
    <source>
    </source>
</evidence>
<evidence type="ECO:0007744" key="9">
    <source>
        <dbReference type="PDB" id="3J79"/>
    </source>
</evidence>
<evidence type="ECO:0007744" key="10">
    <source>
        <dbReference type="PDB" id="3JBN"/>
    </source>
</evidence>
<evidence type="ECO:0007744" key="11">
    <source>
        <dbReference type="PDB" id="3JBO"/>
    </source>
</evidence>
<evidence type="ECO:0007744" key="12">
    <source>
        <dbReference type="PDB" id="3JBP"/>
    </source>
</evidence>
<evidence type="ECO:0007744" key="13">
    <source>
        <dbReference type="PDB" id="5UMD"/>
    </source>
</evidence>
<reference key="1">
    <citation type="journal article" date="1999" name="Nature">
        <title>The complete nucleotide sequence of chromosome 3 of Plasmodium falciparum.</title>
        <authorList>
            <person name="Bowman S."/>
            <person name="Lawson D."/>
            <person name="Basham D."/>
            <person name="Brown D."/>
            <person name="Chillingworth T."/>
            <person name="Churcher C.M."/>
            <person name="Craig A."/>
            <person name="Davies R.M."/>
            <person name="Devlin K."/>
            <person name="Feltwell T."/>
            <person name="Gentles S."/>
            <person name="Gwilliam R."/>
            <person name="Hamlin N."/>
            <person name="Harris D."/>
            <person name="Holroyd S."/>
            <person name="Hornsby T."/>
            <person name="Horrocks P."/>
            <person name="Jagels K."/>
            <person name="Jassal B."/>
            <person name="Kyes S."/>
            <person name="McLean J."/>
            <person name="Moule S."/>
            <person name="Mungall K.L."/>
            <person name="Murphy L."/>
            <person name="Oliver K."/>
            <person name="Quail M.A."/>
            <person name="Rajandream M.A."/>
            <person name="Rutter S."/>
            <person name="Skelton J."/>
            <person name="Squares R."/>
            <person name="Squares S."/>
            <person name="Sulston J.E."/>
            <person name="Whitehead S."/>
            <person name="Woodward J.R."/>
            <person name="Newbold C."/>
            <person name="Barrell B.G."/>
        </authorList>
    </citation>
    <scope>NUCLEOTIDE SEQUENCE [LARGE SCALE GENOMIC DNA]</scope>
    <source>
        <strain>3D7</strain>
    </source>
</reference>
<reference key="2">
    <citation type="journal article" date="2002" name="Nature">
        <title>Genome sequence of the human malaria parasite Plasmodium falciparum.</title>
        <authorList>
            <person name="Gardner M.J."/>
            <person name="Hall N."/>
            <person name="Fung E."/>
            <person name="White O."/>
            <person name="Berriman M."/>
            <person name="Hyman R.W."/>
            <person name="Carlton J.M."/>
            <person name="Pain A."/>
            <person name="Nelson K.E."/>
            <person name="Bowman S."/>
            <person name="Paulsen I.T."/>
            <person name="James K.D."/>
            <person name="Eisen J.A."/>
            <person name="Rutherford K.M."/>
            <person name="Salzberg S.L."/>
            <person name="Craig A."/>
            <person name="Kyes S."/>
            <person name="Chan M.-S."/>
            <person name="Nene V."/>
            <person name="Shallom S.J."/>
            <person name="Suh B."/>
            <person name="Peterson J."/>
            <person name="Angiuoli S."/>
            <person name="Pertea M."/>
            <person name="Allen J."/>
            <person name="Selengut J."/>
            <person name="Haft D."/>
            <person name="Mather M.W."/>
            <person name="Vaidya A.B."/>
            <person name="Martin D.M.A."/>
            <person name="Fairlamb A.H."/>
            <person name="Fraunholz M.J."/>
            <person name="Roos D.S."/>
            <person name="Ralph S.A."/>
            <person name="McFadden G.I."/>
            <person name="Cummings L.M."/>
            <person name="Subramanian G.M."/>
            <person name="Mungall C."/>
            <person name="Venter J.C."/>
            <person name="Carucci D.J."/>
            <person name="Hoffman S.L."/>
            <person name="Newbold C."/>
            <person name="Davis R.W."/>
            <person name="Fraser C.M."/>
            <person name="Barrell B.G."/>
        </authorList>
    </citation>
    <scope>NUCLEOTIDE SEQUENCE [LARGE SCALE GENOMIC DNA]</scope>
    <source>
        <strain>3D7</strain>
    </source>
</reference>
<reference key="3">
    <citation type="journal article" date="2002" name="Nature">
        <title>Sequence of Plasmodium falciparum chromosomes 1, 3-9 and 13.</title>
        <authorList>
            <person name="Hall N."/>
            <person name="Pain A."/>
            <person name="Berriman M."/>
            <person name="Churcher C.M."/>
            <person name="Harris B."/>
            <person name="Harris D."/>
            <person name="Mungall K.L."/>
            <person name="Bowman S."/>
            <person name="Atkin R."/>
            <person name="Baker S."/>
            <person name="Barron A."/>
            <person name="Brooks K."/>
            <person name="Buckee C.O."/>
            <person name="Burrows C."/>
            <person name="Cherevach I."/>
            <person name="Chillingworth C."/>
            <person name="Chillingworth T."/>
            <person name="Christodoulou Z."/>
            <person name="Clark L."/>
            <person name="Clark R."/>
            <person name="Corton C."/>
            <person name="Cronin A."/>
            <person name="Davies R.M."/>
            <person name="Davis P."/>
            <person name="Dear P."/>
            <person name="Dearden F."/>
            <person name="Doggett J."/>
            <person name="Feltwell T."/>
            <person name="Goble A."/>
            <person name="Goodhead I."/>
            <person name="Gwilliam R."/>
            <person name="Hamlin N."/>
            <person name="Hance Z."/>
            <person name="Harper D."/>
            <person name="Hauser H."/>
            <person name="Hornsby T."/>
            <person name="Holroyd S."/>
            <person name="Horrocks P."/>
            <person name="Humphray S."/>
            <person name="Jagels K."/>
            <person name="James K.D."/>
            <person name="Johnson D."/>
            <person name="Kerhornou A."/>
            <person name="Knights A."/>
            <person name="Konfortov B."/>
            <person name="Kyes S."/>
            <person name="Larke N."/>
            <person name="Lawson D."/>
            <person name="Lennard N."/>
            <person name="Line A."/>
            <person name="Maddison M."/>
            <person name="Mclean J."/>
            <person name="Mooney P."/>
            <person name="Moule S."/>
            <person name="Murphy L."/>
            <person name="Oliver K."/>
            <person name="Ormond D."/>
            <person name="Price C."/>
            <person name="Quail M.A."/>
            <person name="Rabbinowitsch E."/>
            <person name="Rajandream M.A."/>
            <person name="Rutter S."/>
            <person name="Rutherford K.M."/>
            <person name="Sanders M."/>
            <person name="Simmonds M."/>
            <person name="Seeger K."/>
            <person name="Sharp S."/>
            <person name="Smith R."/>
            <person name="Squares R."/>
            <person name="Squares S."/>
            <person name="Stevens K."/>
            <person name="Taylor K."/>
            <person name="Tivey A."/>
            <person name="Unwin L."/>
            <person name="Whitehead S."/>
            <person name="Woodward J.R."/>
            <person name="Sulston J.E."/>
            <person name="Craig A."/>
            <person name="Newbold C."/>
            <person name="Barrell B.G."/>
        </authorList>
    </citation>
    <scope>NUCLEOTIDE SEQUENCE [LARGE SCALE GENOMIC DNA]</scope>
    <source>
        <strain>3D7</strain>
    </source>
</reference>
<reference evidence="9" key="4">
    <citation type="journal article" date="2014" name="Elife">
        <title>Cryo-EM structure of the Plasmodium falciparum 80S ribosome bound to the anti-protozoan drug emetine.</title>
        <authorList>
            <person name="Wong W."/>
            <person name="Bai X.C."/>
            <person name="Brown A."/>
            <person name="Fernandez I.S."/>
            <person name="Hanssen E."/>
            <person name="Condron M."/>
            <person name="Tan Y.H."/>
            <person name="Baum J."/>
            <person name="Scheres S.H."/>
        </authorList>
    </citation>
    <scope>STRUCTURE BY ELECTRON MICROSCOPY (3.20 ANGSTROMS) IN COMPLEX WITH RIBOSOMAL PROTEINS; RRNA; TRNA AND EMETINE INHIBITOR</scope>
    <scope>FUNCTION</scope>
    <scope>SUBCELLULAR LOCATION</scope>
    <scope>DEVELOPMENTAL STAGE</scope>
</reference>
<reference evidence="10 11 12" key="5">
    <citation type="journal article" date="2015" name="Nucleic Acids Res.">
        <title>Dynamical features of the Plasmodium falciparum ribosome during translation.</title>
        <authorList>
            <person name="Sun M."/>
            <person name="Li W."/>
            <person name="Blomqvist K."/>
            <person name="Das S."/>
            <person name="Hashem Y."/>
            <person name="Dvorin J.D."/>
            <person name="Frank J."/>
        </authorList>
    </citation>
    <scope>STRUCTURE BY ELECTRON MICROSCOPY (4.70 ANGSTROMS) OF 2-96 IN COMPLEX WITH RIBOSOMAL PROTEINS; RRNA AND TRNA</scope>
    <scope>FUNCTION</scope>
    <scope>DEVELOPMENTAL STAGE</scope>
</reference>
<reference evidence="13" key="6">
    <citation type="journal article" date="2017" name="Nat. Microbiol.">
        <title>Mefloquine targets the Plasmodium falciparum 80S ribosome to inhibit protein synthesis.</title>
        <authorList>
            <person name="Wong W."/>
            <person name="Bai X.C."/>
            <person name="Sleebs B.E."/>
            <person name="Triglia T."/>
            <person name="Brown A."/>
            <person name="Thompson J.K."/>
            <person name="Jackson K.E."/>
            <person name="Hanssen E."/>
            <person name="Marapana D.S."/>
            <person name="Fernandez I.S."/>
            <person name="Ralph S.A."/>
            <person name="Cowman A.F."/>
            <person name="Scheres S.H.W."/>
            <person name="Baum J."/>
        </authorList>
    </citation>
    <scope>STRUCTURE BY ELECTRON MICROSCOPY (3.20 ANGSTROMS) IN COMPLEX WITH RIBOSOMAL PROTEINS; RRNA AND MEFLOQUINE INHIBITOR</scope>
    <scope>FUNCTION</scope>
</reference>
<gene>
    <name evidence="6" type="primary">RPL44</name>
    <name evidence="5" type="synonym">eL44</name>
    <name type="ORF">MAL3P2.9</name>
    <name type="ORF">PF3D7_0304400</name>
    <name type="ORF">PFC0200W</name>
</gene>
<feature type="initiator methionine" description="Removed" evidence="1">
    <location>
        <position position="1"/>
    </location>
</feature>
<feature type="chain" id="PRO_0000149129" description="Large ribosomal subunit protein eL42">
    <location>
        <begin position="2"/>
        <end position="104"/>
    </location>
</feature>
<dbReference type="EMBL" id="AL844502">
    <property type="protein sequence ID" value="CAB38996.1"/>
    <property type="molecule type" value="Genomic_DNA"/>
</dbReference>
<dbReference type="RefSeq" id="XP_001351120.1">
    <property type="nucleotide sequence ID" value="XM_001351084.1"/>
</dbReference>
<dbReference type="PDB" id="3J79">
    <property type="method" value="EM"/>
    <property type="resolution" value="3.20 A"/>
    <property type="chains" value="i=1-104"/>
</dbReference>
<dbReference type="PDB" id="3JBN">
    <property type="method" value="EM"/>
    <property type="resolution" value="4.70 A"/>
    <property type="chains" value="Ai=2-96"/>
</dbReference>
<dbReference type="PDB" id="3JBO">
    <property type="method" value="EM"/>
    <property type="resolution" value="5.80 A"/>
    <property type="chains" value="Ai=2-96"/>
</dbReference>
<dbReference type="PDB" id="3JBP">
    <property type="method" value="EM"/>
    <property type="resolution" value="6.70 A"/>
    <property type="chains" value="Ai=2-96"/>
</dbReference>
<dbReference type="PDB" id="5UMD">
    <property type="method" value="EM"/>
    <property type="resolution" value="3.20 A"/>
    <property type="chains" value="i=1-104"/>
</dbReference>
<dbReference type="PDB" id="8TPU">
    <property type="method" value="EM"/>
    <property type="resolution" value="4.10 A"/>
    <property type="chains" value="Ai=1-104"/>
</dbReference>
<dbReference type="PDBsum" id="3J79"/>
<dbReference type="PDBsum" id="3JBN"/>
<dbReference type="PDBsum" id="3JBO"/>
<dbReference type="PDBsum" id="3JBP"/>
<dbReference type="PDBsum" id="5UMD"/>
<dbReference type="PDBsum" id="8TPU"/>
<dbReference type="EMDB" id="EMD-8576"/>
<dbReference type="SMR" id="O97231"/>
<dbReference type="FunCoup" id="O97231">
    <property type="interactions" value="433"/>
</dbReference>
<dbReference type="IntAct" id="O97231">
    <property type="interactions" value="1"/>
</dbReference>
<dbReference type="STRING" id="36329.O97231"/>
<dbReference type="PaxDb" id="5833-PFC0200w.1"/>
<dbReference type="EnsemblProtists" id="CAB38996">
    <property type="protein sequence ID" value="CAB38996"/>
    <property type="gene ID" value="PF3D7_0304400.1"/>
</dbReference>
<dbReference type="KEGG" id="pfa:PF3D7_0304400.1"/>
<dbReference type="VEuPathDB" id="PlasmoDB:PF3D7_0304400"/>
<dbReference type="HOGENOM" id="CLU_114645_2_1_1"/>
<dbReference type="InParanoid" id="O97231"/>
<dbReference type="OMA" id="CKKHTIH"/>
<dbReference type="OrthoDB" id="2967263at2759"/>
<dbReference type="PhylomeDB" id="O97231"/>
<dbReference type="Reactome" id="R-PFA-156827">
    <property type="pathway name" value="L13a-mediated translational silencing of Ceruloplasmin expression"/>
</dbReference>
<dbReference type="Reactome" id="R-PFA-1799339">
    <property type="pathway name" value="SRP-dependent cotranslational protein targeting to membrane"/>
</dbReference>
<dbReference type="Reactome" id="R-PFA-72689">
    <property type="pathway name" value="Formation of a pool of free 40S subunits"/>
</dbReference>
<dbReference type="Reactome" id="R-PFA-72706">
    <property type="pathway name" value="GTP hydrolysis and joining of the 60S ribosomal subunit"/>
</dbReference>
<dbReference type="Reactome" id="R-PFA-975956">
    <property type="pathway name" value="Nonsense Mediated Decay (NMD) independent of the Exon Junction Complex (EJC)"/>
</dbReference>
<dbReference type="Reactome" id="R-PFA-975957">
    <property type="pathway name" value="Nonsense Mediated Decay (NMD) enhanced by the Exon Junction Complex (EJC)"/>
</dbReference>
<dbReference type="Proteomes" id="UP000001450">
    <property type="component" value="Chromosome 3"/>
</dbReference>
<dbReference type="GO" id="GO:0022625">
    <property type="term" value="C:cytosolic large ribosomal subunit"/>
    <property type="evidence" value="ECO:0000318"/>
    <property type="project" value="GO_Central"/>
</dbReference>
<dbReference type="GO" id="GO:0003735">
    <property type="term" value="F:structural constituent of ribosome"/>
    <property type="evidence" value="ECO:0007669"/>
    <property type="project" value="InterPro"/>
</dbReference>
<dbReference type="GO" id="GO:0006412">
    <property type="term" value="P:translation"/>
    <property type="evidence" value="ECO:0007669"/>
    <property type="project" value="InterPro"/>
</dbReference>
<dbReference type="FunFam" id="3.10.450.80:FF:000001">
    <property type="entry name" value="60S ribosomal protein L44"/>
    <property type="match status" value="1"/>
</dbReference>
<dbReference type="Gene3D" id="3.10.450.80">
    <property type="match status" value="1"/>
</dbReference>
<dbReference type="InterPro" id="IPR000552">
    <property type="entry name" value="Ribosomal_eL44"/>
</dbReference>
<dbReference type="InterPro" id="IPR053708">
    <property type="entry name" value="Ribosomal_LSU_eL42"/>
</dbReference>
<dbReference type="InterPro" id="IPR011332">
    <property type="entry name" value="Ribosomal_zn-bd"/>
</dbReference>
<dbReference type="PANTHER" id="PTHR10369">
    <property type="entry name" value="60S RIBOSOMAL PROTEIN L36A/L44"/>
    <property type="match status" value="1"/>
</dbReference>
<dbReference type="Pfam" id="PF00935">
    <property type="entry name" value="Ribosomal_L44"/>
    <property type="match status" value="1"/>
</dbReference>
<dbReference type="SUPFAM" id="SSF57829">
    <property type="entry name" value="Zn-binding ribosomal proteins"/>
    <property type="match status" value="1"/>
</dbReference>
<dbReference type="PROSITE" id="PS01172">
    <property type="entry name" value="RIBOSOMAL_L44E"/>
    <property type="match status" value="1"/>
</dbReference>
<proteinExistence type="evidence at protein level"/>
<sequence>MVNVPKTRKTYCSNKCKKHTMHKVSQYKKGKERLSSLGRRRYDMKQKGFGGQTKPVFKKKAKTTKKIVLKLECTKCKKKRFQTMKRCKTFEMGADKKKKGGAVY</sequence>
<keyword id="KW-0002">3D-structure</keyword>
<keyword id="KW-0963">Cytoplasm</keyword>
<keyword id="KW-1185">Reference proteome</keyword>
<keyword id="KW-0687">Ribonucleoprotein</keyword>
<keyword id="KW-0689">Ribosomal protein</keyword>
<comment type="function">
    <text evidence="4 7 8">Component of the ribosome, a large ribonucleoprotein complex responsible for the synthesis of proteins in the cell (PubMed:28288098). The small ribosomal subunit (SSU) binds messenger RNAs (mRNAs) and translates the encoded message by selecting cognate aminoacyl-transfer RNA (tRNA) molecules (Probable). The large subunit (LSU) contains the ribosomal catalytic site termed the peptidyl transferase center (PTC), which catalyzes the formation of peptide bonds, thereby polymerizing the amino acids delivered by tRNAs into a polypeptide chain (Probable). The nascent polypeptides leave the ribosome through a tunnel in the LSU and interact with protein factors that function in enzymatic processing, targeting, and the membrane insertion of nascent chains at the exit of the ribosomal tunnel (Probable).</text>
</comment>
<comment type="subunit">
    <text evidence="2 3 4">Component of the large ribosomal subunit (PubMed:24913268, PubMed:26432834, PubMed:28288098). Mature ribosomes consist of a small (40S) and a large (60S) subunit (PubMed:24913268, PubMed:26432834). The 40S subunit contains about 32 different proteins and 1 molecule of RNA (18S). The 60S subunit contains about 42 different proteins and 3 molecules of RNA (28S, 5.8S and 5S) (PubMed:24913268, PubMed:26432834).</text>
</comment>
<comment type="subcellular location">
    <subcellularLocation>
        <location evidence="2">Cytoplasm</location>
    </subcellularLocation>
</comment>
<comment type="developmental stage">
    <text evidence="2 3">Expressed during the asexual blood stage (at protein level).</text>
</comment>
<comment type="similarity">
    <text evidence="6">Belongs to the eukaryotic ribosomal protein eL42 family.</text>
</comment>
<organism>
    <name type="scientific">Plasmodium falciparum (isolate 3D7)</name>
    <dbReference type="NCBI Taxonomy" id="36329"/>
    <lineage>
        <taxon>Eukaryota</taxon>
        <taxon>Sar</taxon>
        <taxon>Alveolata</taxon>
        <taxon>Apicomplexa</taxon>
        <taxon>Aconoidasida</taxon>
        <taxon>Haemosporida</taxon>
        <taxon>Plasmodiidae</taxon>
        <taxon>Plasmodium</taxon>
        <taxon>Plasmodium (Laverania)</taxon>
    </lineage>
</organism>